<feature type="chain" id="PRO_0000185158" description="Methylosome subunit pICln">
    <location>
        <begin position="1"/>
        <end position="241"/>
    </location>
</feature>
<feature type="region of interest" description="Disordered" evidence="2">
    <location>
        <begin position="88"/>
        <end position="112"/>
    </location>
</feature>
<feature type="compositionally biased region" description="Acidic residues" evidence="2">
    <location>
        <begin position="97"/>
        <end position="112"/>
    </location>
</feature>
<protein>
    <recommendedName>
        <fullName>Methylosome subunit pICln</fullName>
    </recommendedName>
    <alternativeName>
        <fullName>Chloride conductance regulatory protein ICln</fullName>
        <shortName>I(Cln)</shortName>
    </alternativeName>
</protein>
<accession>P54106</accession>
<evidence type="ECO:0000250" key="1">
    <source>
        <dbReference type="UniProtKB" id="P54105"/>
    </source>
</evidence>
<evidence type="ECO:0000256" key="2">
    <source>
        <dbReference type="SAM" id="MobiDB-lite"/>
    </source>
</evidence>
<evidence type="ECO:0000305" key="3"/>
<gene>
    <name type="primary">clns1a</name>
    <name type="synonym">icln</name>
</gene>
<reference key="1">
    <citation type="journal article" date="1994" name="Cell">
        <title>Molecular characterization of a swelling-induced chloride conductance regulatory protein, pICln.</title>
        <authorList>
            <person name="Krapivinsky G.B."/>
            <person name="Ackerman M.J."/>
            <person name="Gordon E.A."/>
            <person name="Krapivinsky L.D."/>
            <person name="Clapham D.E."/>
        </authorList>
    </citation>
    <scope>NUCLEOTIDE SEQUENCE [MRNA]</scope>
    <source>
        <tissue>Ovary</tissue>
    </source>
</reference>
<name>ICLN_XENLA</name>
<organism>
    <name type="scientific">Xenopus laevis</name>
    <name type="common">African clawed frog</name>
    <dbReference type="NCBI Taxonomy" id="8355"/>
    <lineage>
        <taxon>Eukaryota</taxon>
        <taxon>Metazoa</taxon>
        <taxon>Chordata</taxon>
        <taxon>Craniata</taxon>
        <taxon>Vertebrata</taxon>
        <taxon>Euteleostomi</taxon>
        <taxon>Amphibia</taxon>
        <taxon>Batrachia</taxon>
        <taxon>Anura</taxon>
        <taxon>Pipoidea</taxon>
        <taxon>Pipidae</taxon>
        <taxon>Xenopodinae</taxon>
        <taxon>Xenopus</taxon>
        <taxon>Xenopus</taxon>
    </lineage>
</organism>
<dbReference type="EMBL" id="L26449">
    <property type="protein sequence ID" value="AAC38009.1"/>
    <property type="molecule type" value="mRNA"/>
</dbReference>
<dbReference type="PIR" id="A53014">
    <property type="entry name" value="A53014"/>
</dbReference>
<dbReference type="RefSeq" id="NP_001081766.1">
    <property type="nucleotide sequence ID" value="NM_001088297.1"/>
</dbReference>
<dbReference type="SMR" id="P54106"/>
<dbReference type="DNASU" id="398038"/>
<dbReference type="GeneID" id="398038"/>
<dbReference type="KEGG" id="xla:398038"/>
<dbReference type="AGR" id="Xenbase:XB-GENE-17346342"/>
<dbReference type="CTD" id="398038"/>
<dbReference type="Xenbase" id="XB-GENE-17346342">
    <property type="gene designation" value="clns1a.S"/>
</dbReference>
<dbReference type="OrthoDB" id="19714at2759"/>
<dbReference type="Proteomes" id="UP000186698">
    <property type="component" value="Chromosome 2S"/>
</dbReference>
<dbReference type="Bgee" id="398038">
    <property type="expression patterns" value="Expressed in blastula and 19 other cell types or tissues"/>
</dbReference>
<dbReference type="GO" id="GO:0005856">
    <property type="term" value="C:cytoskeleton"/>
    <property type="evidence" value="ECO:0007669"/>
    <property type="project" value="UniProtKB-SubCell"/>
</dbReference>
<dbReference type="GO" id="GO:0005829">
    <property type="term" value="C:cytosol"/>
    <property type="evidence" value="ECO:0000250"/>
    <property type="project" value="UniProtKB"/>
</dbReference>
<dbReference type="GO" id="GO:0034709">
    <property type="term" value="C:methylosome"/>
    <property type="evidence" value="ECO:0000250"/>
    <property type="project" value="UniProtKB"/>
</dbReference>
<dbReference type="GO" id="GO:0005634">
    <property type="term" value="C:nucleus"/>
    <property type="evidence" value="ECO:0000250"/>
    <property type="project" value="UniProtKB"/>
</dbReference>
<dbReference type="GO" id="GO:0034715">
    <property type="term" value="C:pICln-Sm protein complex"/>
    <property type="evidence" value="ECO:0000250"/>
    <property type="project" value="UniProtKB"/>
</dbReference>
<dbReference type="GO" id="GO:0005886">
    <property type="term" value="C:plasma membrane"/>
    <property type="evidence" value="ECO:0007669"/>
    <property type="project" value="InterPro"/>
</dbReference>
<dbReference type="GO" id="GO:0005681">
    <property type="term" value="C:spliceosomal complex"/>
    <property type="evidence" value="ECO:0000318"/>
    <property type="project" value="GO_Central"/>
</dbReference>
<dbReference type="GO" id="GO:0006884">
    <property type="term" value="P:cell volume homeostasis"/>
    <property type="evidence" value="ECO:0007669"/>
    <property type="project" value="InterPro"/>
</dbReference>
<dbReference type="GO" id="GO:0006821">
    <property type="term" value="P:chloride transport"/>
    <property type="evidence" value="ECO:0007669"/>
    <property type="project" value="InterPro"/>
</dbReference>
<dbReference type="GO" id="GO:0045292">
    <property type="term" value="P:mRNA cis splicing, via spliceosome"/>
    <property type="evidence" value="ECO:0000318"/>
    <property type="project" value="GO_Central"/>
</dbReference>
<dbReference type="GO" id="GO:0000387">
    <property type="term" value="P:spliceosomal snRNP assembly"/>
    <property type="evidence" value="ECO:0000250"/>
    <property type="project" value="UniProtKB"/>
</dbReference>
<dbReference type="CDD" id="cd13229">
    <property type="entry name" value="PH_TFIIH"/>
    <property type="match status" value="1"/>
</dbReference>
<dbReference type="FunFam" id="2.30.29.30:FF:000220">
    <property type="entry name" value="methylosome subunit pICln isoform X1"/>
    <property type="match status" value="1"/>
</dbReference>
<dbReference type="Gene3D" id="2.30.29.30">
    <property type="entry name" value="Pleckstrin-homology domain (PH domain)/Phosphotyrosine-binding domain (PTB)"/>
    <property type="match status" value="1"/>
</dbReference>
<dbReference type="InterPro" id="IPR003521">
    <property type="entry name" value="ICln"/>
</dbReference>
<dbReference type="InterPro" id="IPR039924">
    <property type="entry name" value="ICln/Lot5/Saf5"/>
</dbReference>
<dbReference type="InterPro" id="IPR011993">
    <property type="entry name" value="PH-like_dom_sf"/>
</dbReference>
<dbReference type="PANTHER" id="PTHR21399">
    <property type="entry name" value="CHLORIDE CONDUCTANCE REGULATORY PROTEIN ICLN"/>
    <property type="match status" value="1"/>
</dbReference>
<dbReference type="PANTHER" id="PTHR21399:SF0">
    <property type="entry name" value="METHYLOSOME SUBUNIT PICLN"/>
    <property type="match status" value="1"/>
</dbReference>
<dbReference type="Pfam" id="PF03517">
    <property type="entry name" value="Voldacs"/>
    <property type="match status" value="1"/>
</dbReference>
<dbReference type="PRINTS" id="PR01348">
    <property type="entry name" value="ICLNCHANNEL"/>
</dbReference>
<sequence length="241" mass="26446">MNLLSSFPPPADGVRRLQPGTEAVVGGRGLGPGTLYIAESRLSWLNGSGLGFSLEYPSISLHAISRDTAAYPEEHLYVMVNSKLADKEDKEAHMADQEEEESEDDDDDEEPITEIRFVPGEKSDLGEMFSAMCDCQALHPDPEDADSDDDYEGDEYDVEAHEQGQVDVPTFYTYEEGLSHLTTEGQATLERLENMLSNSIGNQHTMAGVRTEGPALEPEDGMDVENTQTVAGQFEDADVDH</sequence>
<comment type="function">
    <text evidence="1">Involved in both the assembly of spliceosomal snRNPs and the methylation of Sm proteins (By similarity). Chaperone that regulates the assembly of spliceosomal U1, U2, U4 and U5 small nuclear ribonucleoproteins (snRNPs), the building blocks of the spliceosome, and thereby plays an important role in the splicing of cellular pre-mRNAs (By similarity). Most spliceosomal snRNPs contain a common set of Sm proteins SNRPB, SNRPD1, SNRPD2, SNRPD3, SNRPE, SNRPF and SNRPG that assemble in a heptameric protein ring on the Sm site of the small nuclear RNA to form the core snRNP (Sm core) (By similarity). In the cytosol, the Sm proteins SNRPD1, SNRPD2, SNRPE, SNRPF and SNRPG are trapped in an inactive 6S pICln-Sm complex by the chaperone CLNS1A that controls the assembly of the core snRNP (By similarity). Dissociation by the SMN complex of CLNS1A from the trapped Sm proteins and their transfer to an SMN-Sm complex triggers the assembly of core snRNPs and their transport to the nucleus (By similarity).</text>
</comment>
<comment type="subunit">
    <text evidence="1">Component of the methylosome, a 20S complex containing at least clns1a/picln, prmt5/skb1 and wdr77/mep50; may mediate snrpd1 and snrpd3 methylation. Forms a 6S pICln-Sm complex composed of clns1a/picln, snrpd1, snrpd2, snrpe, snrpf and snrpg; ring-like structure where clns1a/pICln mimics additional Sm proteins and which is unable to assemble into the core snRNP.</text>
</comment>
<comment type="subcellular location">
    <subcellularLocation>
        <location evidence="1">Cytoplasm</location>
        <location evidence="1">Cytosol</location>
    </subcellularLocation>
    <subcellularLocation>
        <location evidence="1">Nucleus</location>
    </subcellularLocation>
    <subcellularLocation>
        <location evidence="1">Cytoplasm</location>
        <location evidence="1">Cytoskeleton</location>
    </subcellularLocation>
</comment>
<comment type="similarity">
    <text evidence="3">Belongs to the pICln (TC 1.A.47) family.</text>
</comment>
<proteinExistence type="evidence at transcript level"/>
<keyword id="KW-0963">Cytoplasm</keyword>
<keyword id="KW-0206">Cytoskeleton</keyword>
<keyword id="KW-0507">mRNA processing</keyword>
<keyword id="KW-0508">mRNA splicing</keyword>
<keyword id="KW-0539">Nucleus</keyword>
<keyword id="KW-1185">Reference proteome</keyword>